<reference key="1">
    <citation type="submission" date="2006-09" db="EMBL/GenBank/DDBJ databases">
        <title>Complete sequence of Rhodopseudomonas palustris BisA53.</title>
        <authorList>
            <consortium name="US DOE Joint Genome Institute"/>
            <person name="Copeland A."/>
            <person name="Lucas S."/>
            <person name="Lapidus A."/>
            <person name="Barry K."/>
            <person name="Detter J.C."/>
            <person name="Glavina del Rio T."/>
            <person name="Hammon N."/>
            <person name="Israni S."/>
            <person name="Dalin E."/>
            <person name="Tice H."/>
            <person name="Pitluck S."/>
            <person name="Chain P."/>
            <person name="Malfatti S."/>
            <person name="Shin M."/>
            <person name="Vergez L."/>
            <person name="Schmutz J."/>
            <person name="Larimer F."/>
            <person name="Land M."/>
            <person name="Hauser L."/>
            <person name="Pelletier D.A."/>
            <person name="Kyrpides N."/>
            <person name="Kim E."/>
            <person name="Harwood C.S."/>
            <person name="Oda Y."/>
            <person name="Richardson P."/>
        </authorList>
    </citation>
    <scope>NUCLEOTIDE SEQUENCE [LARGE SCALE GENOMIC DNA]</scope>
    <source>
        <strain>BisA53</strain>
    </source>
</reference>
<gene>
    <name evidence="1" type="primary">rplA</name>
    <name type="ordered locus">RPE_3606</name>
</gene>
<accession>Q07KJ8</accession>
<name>RL1_RHOP5</name>
<feature type="chain" id="PRO_0000308088" description="Large ribosomal subunit protein uL1">
    <location>
        <begin position="1"/>
        <end position="230"/>
    </location>
</feature>
<comment type="function">
    <text evidence="1">Binds directly to 23S rRNA. The L1 stalk is quite mobile in the ribosome, and is involved in E site tRNA release.</text>
</comment>
<comment type="function">
    <text evidence="1">Protein L1 is also a translational repressor protein, it controls the translation of the L11 operon by binding to its mRNA.</text>
</comment>
<comment type="subunit">
    <text evidence="1">Part of the 50S ribosomal subunit.</text>
</comment>
<comment type="similarity">
    <text evidence="1">Belongs to the universal ribosomal protein uL1 family.</text>
</comment>
<organism>
    <name type="scientific">Rhodopseudomonas palustris (strain BisA53)</name>
    <dbReference type="NCBI Taxonomy" id="316055"/>
    <lineage>
        <taxon>Bacteria</taxon>
        <taxon>Pseudomonadati</taxon>
        <taxon>Pseudomonadota</taxon>
        <taxon>Alphaproteobacteria</taxon>
        <taxon>Hyphomicrobiales</taxon>
        <taxon>Nitrobacteraceae</taxon>
        <taxon>Rhodopseudomonas</taxon>
    </lineage>
</organism>
<protein>
    <recommendedName>
        <fullName evidence="1">Large ribosomal subunit protein uL1</fullName>
    </recommendedName>
    <alternativeName>
        <fullName evidence="2">50S ribosomal protein L1</fullName>
    </alternativeName>
</protein>
<proteinExistence type="inferred from homology"/>
<evidence type="ECO:0000255" key="1">
    <source>
        <dbReference type="HAMAP-Rule" id="MF_01318"/>
    </source>
</evidence>
<evidence type="ECO:0000305" key="2"/>
<dbReference type="EMBL" id="CP000463">
    <property type="protein sequence ID" value="ABJ07536.1"/>
    <property type="molecule type" value="Genomic_DNA"/>
</dbReference>
<dbReference type="SMR" id="Q07KJ8"/>
<dbReference type="STRING" id="316055.RPE_3606"/>
<dbReference type="KEGG" id="rpe:RPE_3606"/>
<dbReference type="eggNOG" id="COG0081">
    <property type="taxonomic scope" value="Bacteria"/>
</dbReference>
<dbReference type="HOGENOM" id="CLU_062853_0_0_5"/>
<dbReference type="OrthoDB" id="9803740at2"/>
<dbReference type="GO" id="GO:0022625">
    <property type="term" value="C:cytosolic large ribosomal subunit"/>
    <property type="evidence" value="ECO:0007669"/>
    <property type="project" value="TreeGrafter"/>
</dbReference>
<dbReference type="GO" id="GO:0019843">
    <property type="term" value="F:rRNA binding"/>
    <property type="evidence" value="ECO:0007669"/>
    <property type="project" value="UniProtKB-UniRule"/>
</dbReference>
<dbReference type="GO" id="GO:0003735">
    <property type="term" value="F:structural constituent of ribosome"/>
    <property type="evidence" value="ECO:0007669"/>
    <property type="project" value="InterPro"/>
</dbReference>
<dbReference type="GO" id="GO:0000049">
    <property type="term" value="F:tRNA binding"/>
    <property type="evidence" value="ECO:0007669"/>
    <property type="project" value="UniProtKB-KW"/>
</dbReference>
<dbReference type="GO" id="GO:0006417">
    <property type="term" value="P:regulation of translation"/>
    <property type="evidence" value="ECO:0007669"/>
    <property type="project" value="UniProtKB-KW"/>
</dbReference>
<dbReference type="GO" id="GO:0006412">
    <property type="term" value="P:translation"/>
    <property type="evidence" value="ECO:0007669"/>
    <property type="project" value="UniProtKB-UniRule"/>
</dbReference>
<dbReference type="CDD" id="cd00403">
    <property type="entry name" value="Ribosomal_L1"/>
    <property type="match status" value="1"/>
</dbReference>
<dbReference type="FunFam" id="3.40.50.790:FF:000001">
    <property type="entry name" value="50S ribosomal protein L1"/>
    <property type="match status" value="1"/>
</dbReference>
<dbReference type="Gene3D" id="3.30.190.20">
    <property type="match status" value="1"/>
</dbReference>
<dbReference type="Gene3D" id="3.40.50.790">
    <property type="match status" value="1"/>
</dbReference>
<dbReference type="HAMAP" id="MF_01318_B">
    <property type="entry name" value="Ribosomal_uL1_B"/>
    <property type="match status" value="1"/>
</dbReference>
<dbReference type="InterPro" id="IPR005878">
    <property type="entry name" value="Ribosom_uL1_bac-type"/>
</dbReference>
<dbReference type="InterPro" id="IPR002143">
    <property type="entry name" value="Ribosomal_uL1"/>
</dbReference>
<dbReference type="InterPro" id="IPR023674">
    <property type="entry name" value="Ribosomal_uL1-like"/>
</dbReference>
<dbReference type="InterPro" id="IPR028364">
    <property type="entry name" value="Ribosomal_uL1/biogenesis"/>
</dbReference>
<dbReference type="InterPro" id="IPR016095">
    <property type="entry name" value="Ribosomal_uL1_3-a/b-sand"/>
</dbReference>
<dbReference type="InterPro" id="IPR023673">
    <property type="entry name" value="Ribosomal_uL1_CS"/>
</dbReference>
<dbReference type="NCBIfam" id="TIGR01169">
    <property type="entry name" value="rplA_bact"/>
    <property type="match status" value="1"/>
</dbReference>
<dbReference type="PANTHER" id="PTHR36427">
    <property type="entry name" value="54S RIBOSOMAL PROTEIN L1, MITOCHONDRIAL"/>
    <property type="match status" value="1"/>
</dbReference>
<dbReference type="PANTHER" id="PTHR36427:SF3">
    <property type="entry name" value="LARGE RIBOSOMAL SUBUNIT PROTEIN UL1M"/>
    <property type="match status" value="1"/>
</dbReference>
<dbReference type="Pfam" id="PF00687">
    <property type="entry name" value="Ribosomal_L1"/>
    <property type="match status" value="1"/>
</dbReference>
<dbReference type="PIRSF" id="PIRSF002155">
    <property type="entry name" value="Ribosomal_L1"/>
    <property type="match status" value="1"/>
</dbReference>
<dbReference type="SUPFAM" id="SSF56808">
    <property type="entry name" value="Ribosomal protein L1"/>
    <property type="match status" value="1"/>
</dbReference>
<dbReference type="PROSITE" id="PS01199">
    <property type="entry name" value="RIBOSOMAL_L1"/>
    <property type="match status" value="1"/>
</dbReference>
<keyword id="KW-0678">Repressor</keyword>
<keyword id="KW-0687">Ribonucleoprotein</keyword>
<keyword id="KW-0689">Ribosomal protein</keyword>
<keyword id="KW-0694">RNA-binding</keyword>
<keyword id="KW-0699">rRNA-binding</keyword>
<keyword id="KW-0810">Translation regulation</keyword>
<keyword id="KW-0820">tRNA-binding</keyword>
<sequence>MAIGKRLKKVREGIDRTKLYPIAEAIKMVKERAVSKFDETIEIAFNLGVDPRHADQMVRGVVSLPNGTGRTLRVGVFARGAKADEARAAGADVVGAEDLVEKVQGGTIEFDRCIATPDMMPLVGRLGKVLGPRGMMPNPKIGTVTMDVAGAVAGAKGGNVEFRVEKAGIVQAGIGKASFSEEKLVENIKALTDAVSKAKPAGAKGTYIQRVAVSSTMGPGVKVEPGTILG</sequence>